<dbReference type="EC" id="2.7.7.6" evidence="1"/>
<dbReference type="EMBL" id="AL646052">
    <property type="protein sequence ID" value="CAD16742.1"/>
    <property type="molecule type" value="Genomic_DNA"/>
</dbReference>
<dbReference type="RefSeq" id="WP_011002928.1">
    <property type="nucleotide sequence ID" value="NC_003295.1"/>
</dbReference>
<dbReference type="SMR" id="Q8XUZ9"/>
<dbReference type="STRING" id="267608.RSc3033"/>
<dbReference type="EnsemblBacteria" id="CAD16742">
    <property type="protein sequence ID" value="CAD16742"/>
    <property type="gene ID" value="RSc3033"/>
</dbReference>
<dbReference type="KEGG" id="rso:RSc3033"/>
<dbReference type="eggNOG" id="COG0086">
    <property type="taxonomic scope" value="Bacteria"/>
</dbReference>
<dbReference type="HOGENOM" id="CLU_000524_3_1_4"/>
<dbReference type="Proteomes" id="UP000001436">
    <property type="component" value="Chromosome"/>
</dbReference>
<dbReference type="GO" id="GO:0000428">
    <property type="term" value="C:DNA-directed RNA polymerase complex"/>
    <property type="evidence" value="ECO:0007669"/>
    <property type="project" value="UniProtKB-KW"/>
</dbReference>
<dbReference type="GO" id="GO:0003677">
    <property type="term" value="F:DNA binding"/>
    <property type="evidence" value="ECO:0007669"/>
    <property type="project" value="UniProtKB-UniRule"/>
</dbReference>
<dbReference type="GO" id="GO:0003899">
    <property type="term" value="F:DNA-directed RNA polymerase activity"/>
    <property type="evidence" value="ECO:0007669"/>
    <property type="project" value="UniProtKB-UniRule"/>
</dbReference>
<dbReference type="GO" id="GO:0000287">
    <property type="term" value="F:magnesium ion binding"/>
    <property type="evidence" value="ECO:0007669"/>
    <property type="project" value="UniProtKB-UniRule"/>
</dbReference>
<dbReference type="GO" id="GO:0008270">
    <property type="term" value="F:zinc ion binding"/>
    <property type="evidence" value="ECO:0007669"/>
    <property type="project" value="UniProtKB-UniRule"/>
</dbReference>
<dbReference type="GO" id="GO:0006351">
    <property type="term" value="P:DNA-templated transcription"/>
    <property type="evidence" value="ECO:0007669"/>
    <property type="project" value="UniProtKB-UniRule"/>
</dbReference>
<dbReference type="CDD" id="cd02655">
    <property type="entry name" value="RNAP_beta'_C"/>
    <property type="match status" value="1"/>
</dbReference>
<dbReference type="CDD" id="cd01609">
    <property type="entry name" value="RNAP_beta'_N"/>
    <property type="match status" value="1"/>
</dbReference>
<dbReference type="FunFam" id="1.10.132.30:FF:000003">
    <property type="entry name" value="DNA-directed RNA polymerase subunit beta"/>
    <property type="match status" value="1"/>
</dbReference>
<dbReference type="FunFam" id="1.10.150.390:FF:000002">
    <property type="entry name" value="DNA-directed RNA polymerase subunit beta"/>
    <property type="match status" value="1"/>
</dbReference>
<dbReference type="FunFam" id="4.10.860.120:FF:000001">
    <property type="entry name" value="DNA-directed RNA polymerase subunit beta"/>
    <property type="match status" value="1"/>
</dbReference>
<dbReference type="Gene3D" id="1.10.132.30">
    <property type="match status" value="1"/>
</dbReference>
<dbReference type="Gene3D" id="1.10.150.390">
    <property type="match status" value="1"/>
</dbReference>
<dbReference type="Gene3D" id="1.10.1790.20">
    <property type="match status" value="1"/>
</dbReference>
<dbReference type="Gene3D" id="1.10.40.90">
    <property type="match status" value="1"/>
</dbReference>
<dbReference type="Gene3D" id="2.40.40.20">
    <property type="match status" value="1"/>
</dbReference>
<dbReference type="Gene3D" id="2.40.50.100">
    <property type="match status" value="3"/>
</dbReference>
<dbReference type="Gene3D" id="4.10.860.120">
    <property type="entry name" value="RNA polymerase II, clamp domain"/>
    <property type="match status" value="1"/>
</dbReference>
<dbReference type="Gene3D" id="1.10.274.100">
    <property type="entry name" value="RNA polymerase Rpb1, domain 3"/>
    <property type="match status" value="1"/>
</dbReference>
<dbReference type="HAMAP" id="MF_01322">
    <property type="entry name" value="RNApol_bact_RpoC"/>
    <property type="match status" value="1"/>
</dbReference>
<dbReference type="InterPro" id="IPR045867">
    <property type="entry name" value="DNA-dir_RpoC_beta_prime"/>
</dbReference>
<dbReference type="InterPro" id="IPR012754">
    <property type="entry name" value="DNA-dir_RpoC_beta_prime_bact"/>
</dbReference>
<dbReference type="InterPro" id="IPR000722">
    <property type="entry name" value="RNA_pol_asu"/>
</dbReference>
<dbReference type="InterPro" id="IPR006592">
    <property type="entry name" value="RNA_pol_N"/>
</dbReference>
<dbReference type="InterPro" id="IPR007080">
    <property type="entry name" value="RNA_pol_Rpb1_1"/>
</dbReference>
<dbReference type="InterPro" id="IPR007066">
    <property type="entry name" value="RNA_pol_Rpb1_3"/>
</dbReference>
<dbReference type="InterPro" id="IPR042102">
    <property type="entry name" value="RNA_pol_Rpb1_3_sf"/>
</dbReference>
<dbReference type="InterPro" id="IPR007083">
    <property type="entry name" value="RNA_pol_Rpb1_4"/>
</dbReference>
<dbReference type="InterPro" id="IPR007081">
    <property type="entry name" value="RNA_pol_Rpb1_5"/>
</dbReference>
<dbReference type="InterPro" id="IPR044893">
    <property type="entry name" value="RNA_pol_Rpb1_clamp_domain"/>
</dbReference>
<dbReference type="InterPro" id="IPR038120">
    <property type="entry name" value="Rpb1_funnel_sf"/>
</dbReference>
<dbReference type="NCBIfam" id="TIGR02386">
    <property type="entry name" value="rpoC_TIGR"/>
    <property type="match status" value="1"/>
</dbReference>
<dbReference type="PANTHER" id="PTHR19376">
    <property type="entry name" value="DNA-DIRECTED RNA POLYMERASE"/>
    <property type="match status" value="1"/>
</dbReference>
<dbReference type="PANTHER" id="PTHR19376:SF54">
    <property type="entry name" value="DNA-DIRECTED RNA POLYMERASE SUBUNIT BETA"/>
    <property type="match status" value="1"/>
</dbReference>
<dbReference type="Pfam" id="PF04997">
    <property type="entry name" value="RNA_pol_Rpb1_1"/>
    <property type="match status" value="1"/>
</dbReference>
<dbReference type="Pfam" id="PF00623">
    <property type="entry name" value="RNA_pol_Rpb1_2"/>
    <property type="match status" value="1"/>
</dbReference>
<dbReference type="Pfam" id="PF04983">
    <property type="entry name" value="RNA_pol_Rpb1_3"/>
    <property type="match status" value="1"/>
</dbReference>
<dbReference type="Pfam" id="PF05000">
    <property type="entry name" value="RNA_pol_Rpb1_4"/>
    <property type="match status" value="1"/>
</dbReference>
<dbReference type="Pfam" id="PF04998">
    <property type="entry name" value="RNA_pol_Rpb1_5"/>
    <property type="match status" value="1"/>
</dbReference>
<dbReference type="SMART" id="SM00663">
    <property type="entry name" value="RPOLA_N"/>
    <property type="match status" value="1"/>
</dbReference>
<dbReference type="SUPFAM" id="SSF64484">
    <property type="entry name" value="beta and beta-prime subunits of DNA dependent RNA-polymerase"/>
    <property type="match status" value="1"/>
</dbReference>
<reference key="1">
    <citation type="journal article" date="2002" name="Nature">
        <title>Genome sequence of the plant pathogen Ralstonia solanacearum.</title>
        <authorList>
            <person name="Salanoubat M."/>
            <person name="Genin S."/>
            <person name="Artiguenave F."/>
            <person name="Gouzy J."/>
            <person name="Mangenot S."/>
            <person name="Arlat M."/>
            <person name="Billault A."/>
            <person name="Brottier P."/>
            <person name="Camus J.-C."/>
            <person name="Cattolico L."/>
            <person name="Chandler M."/>
            <person name="Choisne N."/>
            <person name="Claudel-Renard C."/>
            <person name="Cunnac S."/>
            <person name="Demange N."/>
            <person name="Gaspin C."/>
            <person name="Lavie M."/>
            <person name="Moisan A."/>
            <person name="Robert C."/>
            <person name="Saurin W."/>
            <person name="Schiex T."/>
            <person name="Siguier P."/>
            <person name="Thebault P."/>
            <person name="Whalen M."/>
            <person name="Wincker P."/>
            <person name="Levy M."/>
            <person name="Weissenbach J."/>
            <person name="Boucher C.A."/>
        </authorList>
    </citation>
    <scope>NUCLEOTIDE SEQUENCE [LARGE SCALE GENOMIC DNA]</scope>
    <source>
        <strain>ATCC BAA-1114 / GMI1000</strain>
    </source>
</reference>
<accession>Q8XUZ9</accession>
<name>RPOC_RALN1</name>
<organism>
    <name type="scientific">Ralstonia nicotianae (strain ATCC BAA-1114 / GMI1000)</name>
    <name type="common">Ralstonia solanacearum</name>
    <dbReference type="NCBI Taxonomy" id="267608"/>
    <lineage>
        <taxon>Bacteria</taxon>
        <taxon>Pseudomonadati</taxon>
        <taxon>Pseudomonadota</taxon>
        <taxon>Betaproteobacteria</taxon>
        <taxon>Burkholderiales</taxon>
        <taxon>Burkholderiaceae</taxon>
        <taxon>Ralstonia</taxon>
        <taxon>Ralstonia solanacearum species complex</taxon>
    </lineage>
</organism>
<evidence type="ECO:0000255" key="1">
    <source>
        <dbReference type="HAMAP-Rule" id="MF_01322"/>
    </source>
</evidence>
<sequence>MKALLDLFRQVQQEEQFDAIKIGLASPEKIRSWSFGEVKKPETINYRTFKPERDGLFCAKIFGPIKDYECLCGKYKRLKHRGVICEKCGVEVTLAKVRRERMGHIELAAPTAHIWFLKSLPSRLGMVLDMTLRDIERVLYFEAFVVVEPGMTPLKKSQIMSEDDYLAKCDEYGEGEFVALMGAEGIRELLRGIDIEKQIETIRAELQATGSEAKIKKFAKRLKVLEAFQRSGIKPDWMILEVLPVLPPELRPLVPLDGGRFATSDLNDLYRRVINRNNRLKRLLELKAPEIIVRNEKRMLQEAVDSLLDNGRRGKAMTGANKRPLKSLAEMIKGKGGRFRQNLLGKRVDYSGRSVIVVGPTLKLHQCGLPKLMALELFKPFIFHKLETMGIATTIKAAKKEVESQTPVVWDILEEVIREHPVMLNRAPTLHRLGIQAFEPVLIEGKAIQLHPLVCAAFNADFDGDQMAVHVPLSLEAQMEARTLMLASNNVLFPANGDPSIVPSQDVVLGLYYTTRDKINGRGEGMTFADISEVIRAYENKEVELASRVNVRITEYDLVNPEADGDARFAPKITLQATTVGRAILSEILPKGLPFSVLNKPLKKKEISRLINTAFRKCGLRETVIFADKLLQSGFRLATRAGISIAIDDMLVPPAKEKIISEAAAKVKEYDKQYMSGLVTDQERYNNVVDIWGAAGDQVGKAMMEQLQTEDVVDRHGKTVKQESFNSIYMMADSGARGSAAQIRQLAGMRGLMAKPDGSIIETPITANFREGLNVLQYFISTHGARKGLADTALKTANSGYLTRRLVDVTQDLVVVEDDCGTSNGVAMKALVEGGEVIEALRDRILGRVVVNDVVNPETQETAIEAGTLLDEDLVELIDSIGVDEVKVRTPLTCDTRYGLCAKCYGRDLGRGVLVNSGEAVGVIAAQSIGEPGTQLTMRTFHIGGAASRAAVASSVEAKATGTVRFTATMRYVTNAKGEQIVISRSGEALITDDHGRERERHKIPYGATLLVHDGQSIKAGTQLATWDPLTRPIISEYSGTIKFENVEEGVTVAKQMDEVTGLSTLVVIDAKRRTSASKGIRPQVKLLDSSGAEVKIPGTDHSVTIGFQVGALITVKDGQQVHVGEVLARIPTESQKTRDITGGLPRVAELFEARSPKDAAVLAEVTGTTSFGKDTKGKQRLVITDLDGNAHEFLIAKEKQVLVHDGQVVNKGEMIVEGPADPHDILRLKGVEELATYIVDEVQDVYRLQGVKINDKHIEVIVRQMLRRVQIVDVGDTKFIPGEQVERSELLDENDKVIAEGKRPATYENLLLGITKASLSTDSFISAASFQETTRVLTEAAIMGKVDDLRGLKENVIVGRLIPAGTGLAYHRARKAKEAADRDRAAAIAEEEAASIFETPAVQQEGDA</sequence>
<gene>
    <name evidence="1" type="primary">rpoC</name>
    <name type="ordered locus">RSc3033</name>
    <name type="ORF">RS04724</name>
</gene>
<protein>
    <recommendedName>
        <fullName evidence="1">DNA-directed RNA polymerase subunit beta'</fullName>
        <shortName evidence="1">RNAP subunit beta'</shortName>
        <ecNumber evidence="1">2.7.7.6</ecNumber>
    </recommendedName>
    <alternativeName>
        <fullName evidence="1">RNA polymerase subunit beta'</fullName>
    </alternativeName>
    <alternativeName>
        <fullName evidence="1">Transcriptase subunit beta'</fullName>
    </alternativeName>
</protein>
<comment type="function">
    <text evidence="1">DNA-dependent RNA polymerase catalyzes the transcription of DNA into RNA using the four ribonucleoside triphosphates as substrates.</text>
</comment>
<comment type="catalytic activity">
    <reaction evidence="1">
        <text>RNA(n) + a ribonucleoside 5'-triphosphate = RNA(n+1) + diphosphate</text>
        <dbReference type="Rhea" id="RHEA:21248"/>
        <dbReference type="Rhea" id="RHEA-COMP:14527"/>
        <dbReference type="Rhea" id="RHEA-COMP:17342"/>
        <dbReference type="ChEBI" id="CHEBI:33019"/>
        <dbReference type="ChEBI" id="CHEBI:61557"/>
        <dbReference type="ChEBI" id="CHEBI:140395"/>
        <dbReference type="EC" id="2.7.7.6"/>
    </reaction>
</comment>
<comment type="cofactor">
    <cofactor evidence="1">
        <name>Mg(2+)</name>
        <dbReference type="ChEBI" id="CHEBI:18420"/>
    </cofactor>
    <text evidence="1">Binds 1 Mg(2+) ion per subunit.</text>
</comment>
<comment type="cofactor">
    <cofactor evidence="1">
        <name>Zn(2+)</name>
        <dbReference type="ChEBI" id="CHEBI:29105"/>
    </cofactor>
    <text evidence="1">Binds 2 Zn(2+) ions per subunit.</text>
</comment>
<comment type="subunit">
    <text evidence="1">The RNAP catalytic core consists of 2 alpha, 1 beta, 1 beta' and 1 omega subunit. When a sigma factor is associated with the core the holoenzyme is formed, which can initiate transcription.</text>
</comment>
<comment type="similarity">
    <text evidence="1">Belongs to the RNA polymerase beta' chain family.</text>
</comment>
<keyword id="KW-0240">DNA-directed RNA polymerase</keyword>
<keyword id="KW-0460">Magnesium</keyword>
<keyword id="KW-0479">Metal-binding</keyword>
<keyword id="KW-0548">Nucleotidyltransferase</keyword>
<keyword id="KW-1185">Reference proteome</keyword>
<keyword id="KW-0804">Transcription</keyword>
<keyword id="KW-0808">Transferase</keyword>
<keyword id="KW-0862">Zinc</keyword>
<proteinExistence type="inferred from homology"/>
<feature type="chain" id="PRO_0000067781" description="DNA-directed RNA polymerase subunit beta'">
    <location>
        <begin position="1"/>
        <end position="1409"/>
    </location>
</feature>
<feature type="binding site" evidence="1">
    <location>
        <position position="70"/>
    </location>
    <ligand>
        <name>Zn(2+)</name>
        <dbReference type="ChEBI" id="CHEBI:29105"/>
        <label>1</label>
    </ligand>
</feature>
<feature type="binding site" evidence="1">
    <location>
        <position position="72"/>
    </location>
    <ligand>
        <name>Zn(2+)</name>
        <dbReference type="ChEBI" id="CHEBI:29105"/>
        <label>1</label>
    </ligand>
</feature>
<feature type="binding site" evidence="1">
    <location>
        <position position="85"/>
    </location>
    <ligand>
        <name>Zn(2+)</name>
        <dbReference type="ChEBI" id="CHEBI:29105"/>
        <label>1</label>
    </ligand>
</feature>
<feature type="binding site" evidence="1">
    <location>
        <position position="88"/>
    </location>
    <ligand>
        <name>Zn(2+)</name>
        <dbReference type="ChEBI" id="CHEBI:29105"/>
        <label>1</label>
    </ligand>
</feature>
<feature type="binding site" evidence="1">
    <location>
        <position position="461"/>
    </location>
    <ligand>
        <name>Mg(2+)</name>
        <dbReference type="ChEBI" id="CHEBI:18420"/>
    </ligand>
</feature>
<feature type="binding site" evidence="1">
    <location>
        <position position="463"/>
    </location>
    <ligand>
        <name>Mg(2+)</name>
        <dbReference type="ChEBI" id="CHEBI:18420"/>
    </ligand>
</feature>
<feature type="binding site" evidence="1">
    <location>
        <position position="465"/>
    </location>
    <ligand>
        <name>Mg(2+)</name>
        <dbReference type="ChEBI" id="CHEBI:18420"/>
    </ligand>
</feature>
<feature type="binding site" evidence="1">
    <location>
        <position position="820"/>
    </location>
    <ligand>
        <name>Zn(2+)</name>
        <dbReference type="ChEBI" id="CHEBI:29105"/>
        <label>2</label>
    </ligand>
</feature>
<feature type="binding site" evidence="1">
    <location>
        <position position="894"/>
    </location>
    <ligand>
        <name>Zn(2+)</name>
        <dbReference type="ChEBI" id="CHEBI:29105"/>
        <label>2</label>
    </ligand>
</feature>
<feature type="binding site" evidence="1">
    <location>
        <position position="901"/>
    </location>
    <ligand>
        <name>Zn(2+)</name>
        <dbReference type="ChEBI" id="CHEBI:29105"/>
        <label>2</label>
    </ligand>
</feature>
<feature type="binding site" evidence="1">
    <location>
        <position position="904"/>
    </location>
    <ligand>
        <name>Zn(2+)</name>
        <dbReference type="ChEBI" id="CHEBI:29105"/>
        <label>2</label>
    </ligand>
</feature>